<feature type="chain" id="PRO_0000112706" description="Acetylglutamate kinase">
    <location>
        <begin position="1"/>
        <end position="304"/>
    </location>
</feature>
<feature type="binding site" evidence="1">
    <location>
        <begin position="64"/>
        <end position="65"/>
    </location>
    <ligand>
        <name>substrate</name>
    </ligand>
</feature>
<feature type="binding site" evidence="1">
    <location>
        <position position="86"/>
    </location>
    <ligand>
        <name>substrate</name>
    </ligand>
</feature>
<feature type="binding site" evidence="1">
    <location>
        <position position="181"/>
    </location>
    <ligand>
        <name>substrate</name>
    </ligand>
</feature>
<feature type="site" description="Transition state stabilizer" evidence="1">
    <location>
        <position position="29"/>
    </location>
</feature>
<feature type="site" description="Transition state stabilizer" evidence="1">
    <location>
        <position position="244"/>
    </location>
</feature>
<gene>
    <name evidence="1" type="primary">argB</name>
</gene>
<sequence>MNNKSIRTQILIEALPYIQQFRGAIFVIKYGGAAMKDLISKERLIADIVFLSCIGLKLVCVHGGGPEINFWLNKMNVESKFHDGIRITDELTMQVVEMVLAGKINKELVSLLNNKGVKGVGLCGKDGTILTARKAQCGSIDMGLVGEIKSVDPYLILTLLKENYIPVIASVGADETGKTYNINADFVAGEIAASLGAEKLILVTNTSGILADVSQPESLIRDTNIMQLRQLLSRGIISKGMIPKVNCSIRSLAQGVRAVHIIDGTKPHSLLLEVLTNNGIGTRFLYKQSILLQLNCFSFSNVSI</sequence>
<dbReference type="EC" id="2.7.2.8" evidence="1"/>
<dbReference type="EMBL" id="AF022186">
    <property type="protein sequence ID" value="AAF12905.1"/>
    <property type="molecule type" value="Genomic_DNA"/>
</dbReference>
<dbReference type="RefSeq" id="NP_045189.1">
    <property type="nucleotide sequence ID" value="NC_001840.1"/>
</dbReference>
<dbReference type="SMR" id="Q9TLT0"/>
<dbReference type="GeneID" id="800170"/>
<dbReference type="UniPathway" id="UPA00068">
    <property type="reaction ID" value="UER00107"/>
</dbReference>
<dbReference type="GO" id="GO:0009507">
    <property type="term" value="C:chloroplast"/>
    <property type="evidence" value="ECO:0007669"/>
    <property type="project" value="UniProtKB-SubCell"/>
</dbReference>
<dbReference type="GO" id="GO:0003991">
    <property type="term" value="F:acetylglutamate kinase activity"/>
    <property type="evidence" value="ECO:0007669"/>
    <property type="project" value="UniProtKB-UniRule"/>
</dbReference>
<dbReference type="GO" id="GO:0005524">
    <property type="term" value="F:ATP binding"/>
    <property type="evidence" value="ECO:0007669"/>
    <property type="project" value="UniProtKB-UniRule"/>
</dbReference>
<dbReference type="GO" id="GO:0042450">
    <property type="term" value="P:arginine biosynthetic process via ornithine"/>
    <property type="evidence" value="ECO:0007669"/>
    <property type="project" value="UniProtKB-UniRule"/>
</dbReference>
<dbReference type="GO" id="GO:0006526">
    <property type="term" value="P:L-arginine biosynthetic process"/>
    <property type="evidence" value="ECO:0007669"/>
    <property type="project" value="UniProtKB-UniPathway"/>
</dbReference>
<dbReference type="CDD" id="cd04250">
    <property type="entry name" value="AAK_NAGK-C"/>
    <property type="match status" value="1"/>
</dbReference>
<dbReference type="FunFam" id="3.40.1160.10:FF:000004">
    <property type="entry name" value="Acetylglutamate kinase"/>
    <property type="match status" value="1"/>
</dbReference>
<dbReference type="Gene3D" id="3.40.1160.10">
    <property type="entry name" value="Acetylglutamate kinase-like"/>
    <property type="match status" value="1"/>
</dbReference>
<dbReference type="HAMAP" id="MF_00082">
    <property type="entry name" value="ArgB"/>
    <property type="match status" value="1"/>
</dbReference>
<dbReference type="InterPro" id="IPR036393">
    <property type="entry name" value="AceGlu_kinase-like_sf"/>
</dbReference>
<dbReference type="InterPro" id="IPR004662">
    <property type="entry name" value="AcgluKinase_fam"/>
</dbReference>
<dbReference type="InterPro" id="IPR037528">
    <property type="entry name" value="ArgB"/>
</dbReference>
<dbReference type="InterPro" id="IPR001048">
    <property type="entry name" value="Asp/Glu/Uridylate_kinase"/>
</dbReference>
<dbReference type="InterPro" id="IPR041727">
    <property type="entry name" value="NAGK-C"/>
</dbReference>
<dbReference type="NCBIfam" id="TIGR00761">
    <property type="entry name" value="argB"/>
    <property type="match status" value="1"/>
</dbReference>
<dbReference type="PANTHER" id="PTHR23342">
    <property type="entry name" value="N-ACETYLGLUTAMATE SYNTHASE"/>
    <property type="match status" value="1"/>
</dbReference>
<dbReference type="PANTHER" id="PTHR23342:SF0">
    <property type="entry name" value="N-ACETYLGLUTAMATE SYNTHASE, MITOCHONDRIAL"/>
    <property type="match status" value="1"/>
</dbReference>
<dbReference type="Pfam" id="PF00696">
    <property type="entry name" value="AA_kinase"/>
    <property type="match status" value="1"/>
</dbReference>
<dbReference type="PIRSF" id="PIRSF000728">
    <property type="entry name" value="NAGK"/>
    <property type="match status" value="1"/>
</dbReference>
<dbReference type="SUPFAM" id="SSF53633">
    <property type="entry name" value="Carbamate kinase-like"/>
    <property type="match status" value="1"/>
</dbReference>
<proteinExistence type="inferred from homology"/>
<geneLocation type="chloroplast"/>
<reference key="1">
    <citation type="journal article" date="2000" name="J. Mol. Evol.">
        <title>The structure and gene repertoire of an ancient red algal plastid genome.</title>
        <authorList>
            <person name="Gloeckner G."/>
            <person name="Rosenthal A."/>
            <person name="Valentin K.-U."/>
        </authorList>
    </citation>
    <scope>NUCLEOTIDE SEQUENCE [LARGE SCALE GENOMIC DNA]</scope>
    <source>
        <strain>RK-1</strain>
    </source>
</reference>
<evidence type="ECO:0000255" key="1">
    <source>
        <dbReference type="HAMAP-Rule" id="MF_00082"/>
    </source>
</evidence>
<keyword id="KW-0028">Amino-acid biosynthesis</keyword>
<keyword id="KW-0055">Arginine biosynthesis</keyword>
<keyword id="KW-0067">ATP-binding</keyword>
<keyword id="KW-0150">Chloroplast</keyword>
<keyword id="KW-0418">Kinase</keyword>
<keyword id="KW-0547">Nucleotide-binding</keyword>
<keyword id="KW-0934">Plastid</keyword>
<keyword id="KW-0808">Transferase</keyword>
<organism>
    <name type="scientific">Cyanidium caldarium</name>
    <name type="common">Red alga</name>
    <dbReference type="NCBI Taxonomy" id="2771"/>
    <lineage>
        <taxon>Eukaryota</taxon>
        <taxon>Rhodophyta</taxon>
        <taxon>Bangiophyceae</taxon>
        <taxon>Cyanidiales</taxon>
        <taxon>Cyanidiaceae</taxon>
        <taxon>Cyanidium</taxon>
    </lineage>
</organism>
<name>ARGB_CYACA</name>
<accession>Q9TLT0</accession>
<protein>
    <recommendedName>
        <fullName evidence="1">Acetylglutamate kinase</fullName>
        <ecNumber evidence="1">2.7.2.8</ecNumber>
    </recommendedName>
    <alternativeName>
        <fullName evidence="1">N-acetyl-L-glutamate 5-phosphotransferase</fullName>
    </alternativeName>
    <alternativeName>
        <fullName evidence="1">NAG kinase</fullName>
        <shortName evidence="1">NAGK</shortName>
    </alternativeName>
</protein>
<comment type="function">
    <text evidence="1">Catalyzes the ATP-dependent phosphorylation of N-acetyl-L-glutamate.</text>
</comment>
<comment type="catalytic activity">
    <reaction evidence="1">
        <text>N-acetyl-L-glutamate + ATP = N-acetyl-L-glutamyl 5-phosphate + ADP</text>
        <dbReference type="Rhea" id="RHEA:14629"/>
        <dbReference type="ChEBI" id="CHEBI:30616"/>
        <dbReference type="ChEBI" id="CHEBI:44337"/>
        <dbReference type="ChEBI" id="CHEBI:57936"/>
        <dbReference type="ChEBI" id="CHEBI:456216"/>
        <dbReference type="EC" id="2.7.2.8"/>
    </reaction>
</comment>
<comment type="pathway">
    <text evidence="1">Amino-acid biosynthesis; L-arginine biosynthesis; N(2)-acetyl-L-ornithine from L-glutamate: step 2/4.</text>
</comment>
<comment type="subcellular location">
    <subcellularLocation>
        <location evidence="1">Plastid</location>
        <location evidence="1">Chloroplast</location>
    </subcellularLocation>
</comment>
<comment type="similarity">
    <text evidence="1">Belongs to the acetylglutamate kinase family. ArgB subfamily.</text>
</comment>